<gene>
    <name evidence="1" type="primary">hfq</name>
    <name type="ordered locus">DNO_0595</name>
</gene>
<protein>
    <recommendedName>
        <fullName evidence="1">RNA-binding protein Hfq</fullName>
    </recommendedName>
</protein>
<accession>A5EVF4</accession>
<dbReference type="EMBL" id="CP000513">
    <property type="protein sequence ID" value="ABQ13131.1"/>
    <property type="molecule type" value="Genomic_DNA"/>
</dbReference>
<dbReference type="RefSeq" id="WP_012030929.1">
    <property type="nucleotide sequence ID" value="NC_009446.1"/>
</dbReference>
<dbReference type="SMR" id="A5EVF4"/>
<dbReference type="STRING" id="246195.DNO_0595"/>
<dbReference type="KEGG" id="dno:DNO_0595"/>
<dbReference type="eggNOG" id="COG1923">
    <property type="taxonomic scope" value="Bacteria"/>
</dbReference>
<dbReference type="HOGENOM" id="CLU_113688_2_2_6"/>
<dbReference type="OrthoDB" id="9799751at2"/>
<dbReference type="Proteomes" id="UP000000248">
    <property type="component" value="Chromosome"/>
</dbReference>
<dbReference type="GO" id="GO:0005829">
    <property type="term" value="C:cytosol"/>
    <property type="evidence" value="ECO:0007669"/>
    <property type="project" value="TreeGrafter"/>
</dbReference>
<dbReference type="GO" id="GO:0003723">
    <property type="term" value="F:RNA binding"/>
    <property type="evidence" value="ECO:0007669"/>
    <property type="project" value="UniProtKB-UniRule"/>
</dbReference>
<dbReference type="GO" id="GO:0006355">
    <property type="term" value="P:regulation of DNA-templated transcription"/>
    <property type="evidence" value="ECO:0007669"/>
    <property type="project" value="InterPro"/>
</dbReference>
<dbReference type="GO" id="GO:0043487">
    <property type="term" value="P:regulation of RNA stability"/>
    <property type="evidence" value="ECO:0007669"/>
    <property type="project" value="TreeGrafter"/>
</dbReference>
<dbReference type="GO" id="GO:0045974">
    <property type="term" value="P:regulation of translation, ncRNA-mediated"/>
    <property type="evidence" value="ECO:0007669"/>
    <property type="project" value="TreeGrafter"/>
</dbReference>
<dbReference type="CDD" id="cd01716">
    <property type="entry name" value="Hfq"/>
    <property type="match status" value="1"/>
</dbReference>
<dbReference type="FunFam" id="2.30.30.100:FF:000001">
    <property type="entry name" value="RNA-binding protein Hfq"/>
    <property type="match status" value="1"/>
</dbReference>
<dbReference type="Gene3D" id="2.30.30.100">
    <property type="match status" value="1"/>
</dbReference>
<dbReference type="HAMAP" id="MF_00436">
    <property type="entry name" value="Hfq"/>
    <property type="match status" value="1"/>
</dbReference>
<dbReference type="InterPro" id="IPR005001">
    <property type="entry name" value="Hfq"/>
</dbReference>
<dbReference type="InterPro" id="IPR010920">
    <property type="entry name" value="LSM_dom_sf"/>
</dbReference>
<dbReference type="InterPro" id="IPR047575">
    <property type="entry name" value="Sm"/>
</dbReference>
<dbReference type="NCBIfam" id="TIGR02383">
    <property type="entry name" value="Hfq"/>
    <property type="match status" value="1"/>
</dbReference>
<dbReference type="NCBIfam" id="NF001602">
    <property type="entry name" value="PRK00395.1"/>
    <property type="match status" value="1"/>
</dbReference>
<dbReference type="PANTHER" id="PTHR34772">
    <property type="entry name" value="RNA-BINDING PROTEIN HFQ"/>
    <property type="match status" value="1"/>
</dbReference>
<dbReference type="PANTHER" id="PTHR34772:SF1">
    <property type="entry name" value="RNA-BINDING PROTEIN HFQ"/>
    <property type="match status" value="1"/>
</dbReference>
<dbReference type="Pfam" id="PF17209">
    <property type="entry name" value="Hfq"/>
    <property type="match status" value="1"/>
</dbReference>
<dbReference type="SUPFAM" id="SSF50182">
    <property type="entry name" value="Sm-like ribonucleoproteins"/>
    <property type="match status" value="1"/>
</dbReference>
<dbReference type="PROSITE" id="PS52002">
    <property type="entry name" value="SM"/>
    <property type="match status" value="1"/>
</dbReference>
<comment type="function">
    <text evidence="1">RNA chaperone that binds small regulatory RNA (sRNAs) and mRNAs to facilitate mRNA translational regulation in response to envelope stress, environmental stress and changes in metabolite concentrations. Also binds with high specificity to tRNAs.</text>
</comment>
<comment type="subunit">
    <text evidence="1">Homohexamer.</text>
</comment>
<comment type="similarity">
    <text evidence="1">Belongs to the Hfq family.</text>
</comment>
<evidence type="ECO:0000255" key="1">
    <source>
        <dbReference type="HAMAP-Rule" id="MF_00436"/>
    </source>
</evidence>
<evidence type="ECO:0000255" key="2">
    <source>
        <dbReference type="PROSITE-ProRule" id="PRU01346"/>
    </source>
</evidence>
<evidence type="ECO:0000256" key="3">
    <source>
        <dbReference type="SAM" id="MobiDB-lite"/>
    </source>
</evidence>
<feature type="chain" id="PRO_1000025905" description="RNA-binding protein Hfq">
    <location>
        <begin position="1"/>
        <end position="106"/>
    </location>
</feature>
<feature type="domain" description="Sm" evidence="2">
    <location>
        <begin position="9"/>
        <end position="68"/>
    </location>
</feature>
<feature type="region of interest" description="Disordered" evidence="3">
    <location>
        <begin position="78"/>
        <end position="106"/>
    </location>
</feature>
<name>HFQ_DICNV</name>
<keyword id="KW-1185">Reference proteome</keyword>
<keyword id="KW-0694">RNA-binding</keyword>
<keyword id="KW-0346">Stress response</keyword>
<organism>
    <name type="scientific">Dichelobacter nodosus (strain VCS1703A)</name>
    <dbReference type="NCBI Taxonomy" id="246195"/>
    <lineage>
        <taxon>Bacteria</taxon>
        <taxon>Pseudomonadati</taxon>
        <taxon>Pseudomonadota</taxon>
        <taxon>Gammaproteobacteria</taxon>
        <taxon>Cardiobacteriales</taxon>
        <taxon>Cardiobacteriaceae</taxon>
        <taxon>Dichelobacter</taxon>
    </lineage>
</organism>
<sequence length="106" mass="11854">MSKSQSLQDPYLNALRKERVPVSIYLVNGIKLQGQIESFDAFVILLRNNISQMVYKHAVSTIVPSRNIHLSREEMGLEDEAGEEISAEYTPNAEGQAEATADPLYD</sequence>
<proteinExistence type="inferred from homology"/>
<reference key="1">
    <citation type="journal article" date="2007" name="Nat. Biotechnol.">
        <title>Genome sequence and identification of candidate vaccine antigens from the animal pathogen Dichelobacter nodosus.</title>
        <authorList>
            <person name="Myers G.S.A."/>
            <person name="Parker D."/>
            <person name="Al-Hasani K."/>
            <person name="Kennan R.M."/>
            <person name="Seemann T."/>
            <person name="Ren Q."/>
            <person name="Badger J.H."/>
            <person name="Selengut J.D."/>
            <person name="Deboy R.T."/>
            <person name="Tettelin H."/>
            <person name="Boyce J.D."/>
            <person name="McCarl V.P."/>
            <person name="Han X."/>
            <person name="Nelson W.C."/>
            <person name="Madupu R."/>
            <person name="Mohamoud Y."/>
            <person name="Holley T."/>
            <person name="Fedorova N."/>
            <person name="Khouri H."/>
            <person name="Bottomley S.P."/>
            <person name="Whittington R.J."/>
            <person name="Adler B."/>
            <person name="Songer J.G."/>
            <person name="Rood J.I."/>
            <person name="Paulsen I.T."/>
        </authorList>
    </citation>
    <scope>NUCLEOTIDE SEQUENCE [LARGE SCALE GENOMIC DNA]</scope>
    <source>
        <strain>VCS1703A</strain>
    </source>
</reference>